<feature type="chain" id="PRO_0000269877" description="Zinc finger AN1 domain-containing stress-associated protein 14">
    <location>
        <begin position="1"/>
        <end position="237"/>
    </location>
</feature>
<feature type="zinc finger region" description="AN1-type" evidence="2">
    <location>
        <begin position="171"/>
        <end position="217"/>
    </location>
</feature>
<feature type="region of interest" description="Disordered" evidence="3">
    <location>
        <begin position="1"/>
        <end position="31"/>
    </location>
</feature>
<feature type="binding site" evidence="2">
    <location>
        <position position="177"/>
    </location>
    <ligand>
        <name>Zn(2+)</name>
        <dbReference type="ChEBI" id="CHEBI:29105"/>
        <label>1</label>
    </ligand>
</feature>
<feature type="binding site" evidence="2">
    <location>
        <position position="180"/>
    </location>
    <ligand>
        <name>Zn(2+)</name>
        <dbReference type="ChEBI" id="CHEBI:29105"/>
        <label>1</label>
    </ligand>
</feature>
<feature type="binding site" evidence="2">
    <location>
        <position position="191"/>
    </location>
    <ligand>
        <name>Zn(2+)</name>
        <dbReference type="ChEBI" id="CHEBI:29105"/>
        <label>2</label>
    </ligand>
</feature>
<feature type="binding site" evidence="2">
    <location>
        <position position="193"/>
    </location>
    <ligand>
        <name>Zn(2+)</name>
        <dbReference type="ChEBI" id="CHEBI:29105"/>
        <label>2</label>
    </ligand>
</feature>
<feature type="binding site" evidence="2">
    <location>
        <position position="198"/>
    </location>
    <ligand>
        <name>Zn(2+)</name>
        <dbReference type="ChEBI" id="CHEBI:29105"/>
        <label>1</label>
    </ligand>
</feature>
<feature type="binding site" evidence="2">
    <location>
        <position position="201"/>
    </location>
    <ligand>
        <name>Zn(2+)</name>
        <dbReference type="ChEBI" id="CHEBI:29105"/>
        <label>1</label>
    </ligand>
</feature>
<feature type="binding site" evidence="2">
    <location>
        <position position="207"/>
    </location>
    <ligand>
        <name>Zn(2+)</name>
        <dbReference type="ChEBI" id="CHEBI:29105"/>
        <label>2</label>
    </ligand>
</feature>
<feature type="binding site" evidence="2">
    <location>
        <position position="209"/>
    </location>
    <ligand>
        <name>Zn(2+)</name>
        <dbReference type="ChEBI" id="CHEBI:29105"/>
        <label>2</label>
    </ligand>
</feature>
<feature type="sequence conflict" description="In Ref. 6; AK108384." evidence="5" ref="6">
    <original>G</original>
    <variation>D</variation>
    <location>
        <position position="208"/>
    </location>
</feature>
<proteinExistence type="evidence at transcript level"/>
<name>SAP14_ORYSJ</name>
<comment type="function">
    <text evidence="1">May be involved in environmental stress response.</text>
</comment>
<comment type="induction">
    <text evidence="4">By cold, dehydration and salt stress.</text>
</comment>
<dbReference type="EMBL" id="AC090871">
    <property type="protein sequence ID" value="AAO37968.1"/>
    <property type="molecule type" value="Genomic_DNA"/>
</dbReference>
<dbReference type="EMBL" id="DP000009">
    <property type="protein sequence ID" value="ABF99309.1"/>
    <property type="molecule type" value="Genomic_DNA"/>
</dbReference>
<dbReference type="EMBL" id="AP008209">
    <property type="protein sequence ID" value="BAF13444.1"/>
    <property type="molecule type" value="Genomic_DNA"/>
</dbReference>
<dbReference type="EMBL" id="AP014959">
    <property type="protein sequence ID" value="BAS86804.1"/>
    <property type="molecule type" value="Genomic_DNA"/>
</dbReference>
<dbReference type="EMBL" id="CM000140">
    <property type="protein sequence ID" value="EAZ28881.1"/>
    <property type="molecule type" value="Genomic_DNA"/>
</dbReference>
<dbReference type="EMBL" id="AK108384">
    <property type="status" value="NOT_ANNOTATED_CDS"/>
    <property type="molecule type" value="mRNA"/>
</dbReference>
<dbReference type="RefSeq" id="XP_015630332.1">
    <property type="nucleotide sequence ID" value="XM_015774846.1"/>
</dbReference>
<dbReference type="SMR" id="Q852K8"/>
<dbReference type="STRING" id="39947.Q852K8"/>
<dbReference type="PaxDb" id="39947-Q852K8"/>
<dbReference type="EnsemblPlants" id="Os03t0793300-01">
    <property type="protein sequence ID" value="Os03t0793300-01"/>
    <property type="gene ID" value="Os03g0793300"/>
</dbReference>
<dbReference type="Gramene" id="Os03t0793300-01">
    <property type="protein sequence ID" value="Os03t0793300-01"/>
    <property type="gene ID" value="Os03g0793300"/>
</dbReference>
<dbReference type="KEGG" id="dosa:Os03g0793300"/>
<dbReference type="eggNOG" id="KOG3173">
    <property type="taxonomic scope" value="Eukaryota"/>
</dbReference>
<dbReference type="HOGENOM" id="CLU_1167511_0_0_1"/>
<dbReference type="InParanoid" id="Q852K8"/>
<dbReference type="OMA" id="PEANRCA"/>
<dbReference type="OrthoDB" id="685944at2759"/>
<dbReference type="Proteomes" id="UP000000763">
    <property type="component" value="Chromosome 3"/>
</dbReference>
<dbReference type="Proteomes" id="UP000007752">
    <property type="component" value="Chromosome 3"/>
</dbReference>
<dbReference type="Proteomes" id="UP000059680">
    <property type="component" value="Chromosome 3"/>
</dbReference>
<dbReference type="GO" id="GO:0008270">
    <property type="term" value="F:zinc ion binding"/>
    <property type="evidence" value="ECO:0007669"/>
    <property type="project" value="UniProtKB-KW"/>
</dbReference>
<dbReference type="FunFam" id="4.10.1110.10:FF:000001">
    <property type="entry name" value="Zinc finger AN1-type containing 6"/>
    <property type="match status" value="1"/>
</dbReference>
<dbReference type="Gene3D" id="4.10.1110.10">
    <property type="entry name" value="AN1-like Zinc finger"/>
    <property type="match status" value="1"/>
</dbReference>
<dbReference type="InterPro" id="IPR035896">
    <property type="entry name" value="AN1-like_Znf"/>
</dbReference>
<dbReference type="InterPro" id="IPR050652">
    <property type="entry name" value="AN1_A20_ZnFinger"/>
</dbReference>
<dbReference type="InterPro" id="IPR000058">
    <property type="entry name" value="Znf_AN1"/>
</dbReference>
<dbReference type="PANTHER" id="PTHR10634">
    <property type="entry name" value="AN1-TYPE ZINC FINGER PROTEIN"/>
    <property type="match status" value="1"/>
</dbReference>
<dbReference type="PANTHER" id="PTHR10634:SF98">
    <property type="entry name" value="ZINC FINGER A20 AND AN1 DOMAIN-CONTAINING STRESS-ASSOCIATED PROTEIN 3"/>
    <property type="match status" value="1"/>
</dbReference>
<dbReference type="Pfam" id="PF01428">
    <property type="entry name" value="zf-AN1"/>
    <property type="match status" value="1"/>
</dbReference>
<dbReference type="SMART" id="SM00154">
    <property type="entry name" value="ZnF_AN1"/>
    <property type="match status" value="1"/>
</dbReference>
<dbReference type="SUPFAM" id="SSF118310">
    <property type="entry name" value="AN1-like Zinc finger"/>
    <property type="match status" value="1"/>
</dbReference>
<dbReference type="PROSITE" id="PS51039">
    <property type="entry name" value="ZF_AN1"/>
    <property type="match status" value="1"/>
</dbReference>
<organism>
    <name type="scientific">Oryza sativa subsp. japonica</name>
    <name type="common">Rice</name>
    <dbReference type="NCBI Taxonomy" id="39947"/>
    <lineage>
        <taxon>Eukaryota</taxon>
        <taxon>Viridiplantae</taxon>
        <taxon>Streptophyta</taxon>
        <taxon>Embryophyta</taxon>
        <taxon>Tracheophyta</taxon>
        <taxon>Spermatophyta</taxon>
        <taxon>Magnoliopsida</taxon>
        <taxon>Liliopsida</taxon>
        <taxon>Poales</taxon>
        <taxon>Poaceae</taxon>
        <taxon>BOP clade</taxon>
        <taxon>Oryzoideae</taxon>
        <taxon>Oryzeae</taxon>
        <taxon>Oryzinae</taxon>
        <taxon>Oryza</taxon>
        <taxon>Oryza sativa</taxon>
    </lineage>
</organism>
<reference key="1">
    <citation type="journal article" date="2005" name="Genome Res.">
        <title>Sequence, annotation, and analysis of synteny between rice chromosome 3 and diverged grass species.</title>
        <authorList>
            <consortium name="The rice chromosome 3 sequencing consortium"/>
            <person name="Buell C.R."/>
            <person name="Yuan Q."/>
            <person name="Ouyang S."/>
            <person name="Liu J."/>
            <person name="Zhu W."/>
            <person name="Wang A."/>
            <person name="Maiti R."/>
            <person name="Haas B."/>
            <person name="Wortman J."/>
            <person name="Pertea M."/>
            <person name="Jones K.M."/>
            <person name="Kim M."/>
            <person name="Overton L."/>
            <person name="Tsitrin T."/>
            <person name="Fadrosh D."/>
            <person name="Bera J."/>
            <person name="Weaver B."/>
            <person name="Jin S."/>
            <person name="Johri S."/>
            <person name="Reardon M."/>
            <person name="Webb K."/>
            <person name="Hill J."/>
            <person name="Moffat K."/>
            <person name="Tallon L."/>
            <person name="Van Aken S."/>
            <person name="Lewis M."/>
            <person name="Utterback T."/>
            <person name="Feldblyum T."/>
            <person name="Zismann V."/>
            <person name="Iobst S."/>
            <person name="Hsiao J."/>
            <person name="de Vazeille A.R."/>
            <person name="Salzberg S.L."/>
            <person name="White O."/>
            <person name="Fraser C.M."/>
            <person name="Yu Y."/>
            <person name="Kim H."/>
            <person name="Rambo T."/>
            <person name="Currie J."/>
            <person name="Collura K."/>
            <person name="Kernodle-Thompson S."/>
            <person name="Wei F."/>
            <person name="Kudrna K."/>
            <person name="Ammiraju J.S.S."/>
            <person name="Luo M."/>
            <person name="Goicoechea J.L."/>
            <person name="Wing R.A."/>
            <person name="Henry D."/>
            <person name="Oates R."/>
            <person name="Palmer M."/>
            <person name="Pries G."/>
            <person name="Saski C."/>
            <person name="Simmons J."/>
            <person name="Soderlund C."/>
            <person name="Nelson W."/>
            <person name="de la Bastide M."/>
            <person name="Spiegel L."/>
            <person name="Nascimento L."/>
            <person name="Huang E."/>
            <person name="Preston R."/>
            <person name="Zutavern T."/>
            <person name="Palmer L."/>
            <person name="O'Shaughnessy A."/>
            <person name="Dike S."/>
            <person name="McCombie W.R."/>
            <person name="Minx P."/>
            <person name="Cordum H."/>
            <person name="Wilson R."/>
            <person name="Jin W."/>
            <person name="Lee H.R."/>
            <person name="Jiang J."/>
            <person name="Jackson S."/>
        </authorList>
    </citation>
    <scope>NUCLEOTIDE SEQUENCE [LARGE SCALE GENOMIC DNA]</scope>
    <source>
        <strain>cv. Nipponbare</strain>
    </source>
</reference>
<reference key="2">
    <citation type="journal article" date="2005" name="Nature">
        <title>The map-based sequence of the rice genome.</title>
        <authorList>
            <consortium name="International rice genome sequencing project (IRGSP)"/>
        </authorList>
    </citation>
    <scope>NUCLEOTIDE SEQUENCE [LARGE SCALE GENOMIC DNA]</scope>
    <source>
        <strain>cv. Nipponbare</strain>
    </source>
</reference>
<reference key="3">
    <citation type="journal article" date="2008" name="Nucleic Acids Res.">
        <title>The rice annotation project database (RAP-DB): 2008 update.</title>
        <authorList>
            <consortium name="The rice annotation project (RAP)"/>
        </authorList>
    </citation>
    <scope>GENOME REANNOTATION</scope>
    <source>
        <strain>cv. Nipponbare</strain>
    </source>
</reference>
<reference key="4">
    <citation type="journal article" date="2013" name="Rice">
        <title>Improvement of the Oryza sativa Nipponbare reference genome using next generation sequence and optical map data.</title>
        <authorList>
            <person name="Kawahara Y."/>
            <person name="de la Bastide M."/>
            <person name="Hamilton J.P."/>
            <person name="Kanamori H."/>
            <person name="McCombie W.R."/>
            <person name="Ouyang S."/>
            <person name="Schwartz D.C."/>
            <person name="Tanaka T."/>
            <person name="Wu J."/>
            <person name="Zhou S."/>
            <person name="Childs K.L."/>
            <person name="Davidson R.M."/>
            <person name="Lin H."/>
            <person name="Quesada-Ocampo L."/>
            <person name="Vaillancourt B."/>
            <person name="Sakai H."/>
            <person name="Lee S.S."/>
            <person name="Kim J."/>
            <person name="Numa H."/>
            <person name="Itoh T."/>
            <person name="Buell C.R."/>
            <person name="Matsumoto T."/>
        </authorList>
    </citation>
    <scope>GENOME REANNOTATION</scope>
    <source>
        <strain>cv. Nipponbare</strain>
    </source>
</reference>
<reference key="5">
    <citation type="journal article" date="2005" name="PLoS Biol.">
        <title>The genomes of Oryza sativa: a history of duplications.</title>
        <authorList>
            <person name="Yu J."/>
            <person name="Wang J."/>
            <person name="Lin W."/>
            <person name="Li S."/>
            <person name="Li H."/>
            <person name="Zhou J."/>
            <person name="Ni P."/>
            <person name="Dong W."/>
            <person name="Hu S."/>
            <person name="Zeng C."/>
            <person name="Zhang J."/>
            <person name="Zhang Y."/>
            <person name="Li R."/>
            <person name="Xu Z."/>
            <person name="Li S."/>
            <person name="Li X."/>
            <person name="Zheng H."/>
            <person name="Cong L."/>
            <person name="Lin L."/>
            <person name="Yin J."/>
            <person name="Geng J."/>
            <person name="Li G."/>
            <person name="Shi J."/>
            <person name="Liu J."/>
            <person name="Lv H."/>
            <person name="Li J."/>
            <person name="Wang J."/>
            <person name="Deng Y."/>
            <person name="Ran L."/>
            <person name="Shi X."/>
            <person name="Wang X."/>
            <person name="Wu Q."/>
            <person name="Li C."/>
            <person name="Ren X."/>
            <person name="Wang J."/>
            <person name="Wang X."/>
            <person name="Li D."/>
            <person name="Liu D."/>
            <person name="Zhang X."/>
            <person name="Ji Z."/>
            <person name="Zhao W."/>
            <person name="Sun Y."/>
            <person name="Zhang Z."/>
            <person name="Bao J."/>
            <person name="Han Y."/>
            <person name="Dong L."/>
            <person name="Ji J."/>
            <person name="Chen P."/>
            <person name="Wu S."/>
            <person name="Liu J."/>
            <person name="Xiao Y."/>
            <person name="Bu D."/>
            <person name="Tan J."/>
            <person name="Yang L."/>
            <person name="Ye C."/>
            <person name="Zhang J."/>
            <person name="Xu J."/>
            <person name="Zhou Y."/>
            <person name="Yu Y."/>
            <person name="Zhang B."/>
            <person name="Zhuang S."/>
            <person name="Wei H."/>
            <person name="Liu B."/>
            <person name="Lei M."/>
            <person name="Yu H."/>
            <person name="Li Y."/>
            <person name="Xu H."/>
            <person name="Wei S."/>
            <person name="He X."/>
            <person name="Fang L."/>
            <person name="Zhang Z."/>
            <person name="Zhang Y."/>
            <person name="Huang X."/>
            <person name="Su Z."/>
            <person name="Tong W."/>
            <person name="Li J."/>
            <person name="Tong Z."/>
            <person name="Li S."/>
            <person name="Ye J."/>
            <person name="Wang L."/>
            <person name="Fang L."/>
            <person name="Lei T."/>
            <person name="Chen C.-S."/>
            <person name="Chen H.-C."/>
            <person name="Xu Z."/>
            <person name="Li H."/>
            <person name="Huang H."/>
            <person name="Zhang F."/>
            <person name="Xu H."/>
            <person name="Li N."/>
            <person name="Zhao C."/>
            <person name="Li S."/>
            <person name="Dong L."/>
            <person name="Huang Y."/>
            <person name="Li L."/>
            <person name="Xi Y."/>
            <person name="Qi Q."/>
            <person name="Li W."/>
            <person name="Zhang B."/>
            <person name="Hu W."/>
            <person name="Zhang Y."/>
            <person name="Tian X."/>
            <person name="Jiao Y."/>
            <person name="Liang X."/>
            <person name="Jin J."/>
            <person name="Gao L."/>
            <person name="Zheng W."/>
            <person name="Hao B."/>
            <person name="Liu S.-M."/>
            <person name="Wang W."/>
            <person name="Yuan L."/>
            <person name="Cao M."/>
            <person name="McDermott J."/>
            <person name="Samudrala R."/>
            <person name="Wang J."/>
            <person name="Wong G.K.-S."/>
            <person name="Yang H."/>
        </authorList>
    </citation>
    <scope>NUCLEOTIDE SEQUENCE [LARGE SCALE GENOMIC DNA]</scope>
    <source>
        <strain>cv. Nipponbare</strain>
    </source>
</reference>
<reference key="6">
    <citation type="journal article" date="2003" name="Science">
        <title>Collection, mapping, and annotation of over 28,000 cDNA clones from japonica rice.</title>
        <authorList>
            <consortium name="The rice full-length cDNA consortium"/>
        </authorList>
    </citation>
    <scope>NUCLEOTIDE SEQUENCE [LARGE SCALE MRNA]</scope>
    <source>
        <strain>cv. Nipponbare</strain>
    </source>
</reference>
<reference key="7">
    <citation type="journal article" date="2006" name="Mol. Genet. Genomics">
        <title>Genome-wide analysis of the stress associated protein (SAP) gene family containing A20/AN1 zinc-finger(s) in rice and their phylogenetic relationship with Arabidopsis.</title>
        <authorList>
            <person name="Vij S."/>
            <person name="Tyagi A.K."/>
        </authorList>
    </citation>
    <scope>GENE FAMILY</scope>
    <scope>INDUCTION</scope>
</reference>
<protein>
    <recommendedName>
        <fullName>Zinc finger AN1 domain-containing stress-associated protein 14</fullName>
        <shortName>OsSAP14</shortName>
    </recommendedName>
</protein>
<accession>Q852K8</accession>
<accession>A3ANJ2</accession>
<gene>
    <name type="primary">SAP14</name>
    <name type="ordered locus">Os03g0793300</name>
    <name type="ordered locus">LOC_Os03g57920</name>
    <name evidence="6" type="ORF">OsJ_12921</name>
    <name type="ORF">OSJNBb0060J21.14</name>
</gene>
<sequence length="237" mass="23891">MATKRKCPANGDDGGVADLEPVAGGSFASPPPEKKAKLTVAVAVAVAPSSSSSATTAAAGEATAKREHGGFFAFARPENNTRLSVAVASSSSSASAAAEKAMAKLTVAGVAPSSSASAAAAGKATAKREYGGFCAFARPDDKTRWRVAVASSAAAAADASYSSSSPATGEQPEANRCATCRRKVGLTGFKCRCGGTFCGGHRYADEHGCGFDYKSSGRELIAKQNPVVVADKLAFRI</sequence>
<evidence type="ECO:0000250" key="1"/>
<evidence type="ECO:0000255" key="2">
    <source>
        <dbReference type="PROSITE-ProRule" id="PRU00449"/>
    </source>
</evidence>
<evidence type="ECO:0000256" key="3">
    <source>
        <dbReference type="SAM" id="MobiDB-lite"/>
    </source>
</evidence>
<evidence type="ECO:0000269" key="4">
    <source>
    </source>
</evidence>
<evidence type="ECO:0000305" key="5"/>
<evidence type="ECO:0000312" key="6">
    <source>
        <dbReference type="EMBL" id="EAZ28881.1"/>
    </source>
</evidence>
<keyword id="KW-0479">Metal-binding</keyword>
<keyword id="KW-1185">Reference proteome</keyword>
<keyword id="KW-0346">Stress response</keyword>
<keyword id="KW-0862">Zinc</keyword>
<keyword id="KW-0863">Zinc-finger</keyword>